<comment type="subcellular location">
    <subcellularLocation>
        <location evidence="3">Secreted</location>
    </subcellularLocation>
</comment>
<comment type="tissue specificity">
    <text>Tapetum of anthers.</text>
</comment>
<comment type="similarity">
    <text evidence="3">Belongs to the A9/FIL1 family.</text>
</comment>
<name>ZM33_MAIZE</name>
<feature type="signal peptide" evidence="2">
    <location>
        <begin position="1"/>
        <end position="41"/>
    </location>
</feature>
<feature type="chain" id="PRO_0000000239" description="Anther-specific protein MZm3-3">
    <location>
        <begin position="42"/>
        <end position="109"/>
    </location>
</feature>
<feature type="disulfide bond" evidence="1">
    <location>
        <begin position="45"/>
        <end position="86"/>
    </location>
</feature>
<feature type="disulfide bond" evidence="1">
    <location>
        <begin position="55"/>
        <end position="75"/>
    </location>
</feature>
<feature type="disulfide bond" evidence="1">
    <location>
        <begin position="76"/>
        <end position="101"/>
    </location>
</feature>
<feature type="disulfide bond" evidence="1">
    <location>
        <begin position="88"/>
        <end position="108"/>
    </location>
</feature>
<proteinExistence type="evidence at transcript level"/>
<sequence length="109" mass="10669">MTATTTTAAGGGKVQPRGLPVALSLLLLLVLAAGLGGGAEAQQTCAGQLRGLAPCLRYSVPPLPGQVPPAPGPECCSALGAVSRDCACGTFSIINSLPAKCALPPVSCQ</sequence>
<reference key="1">
    <citation type="journal article" date="2000" name="Plant Sci.">
        <title>Characterization of MZm3-3, a Zea mays tapetum-specific transcript.</title>
        <authorList>
            <person name="Lauga B."/>
            <person name="Charbonnel-Campaa L."/>
            <person name="Combes D."/>
        </authorList>
    </citation>
    <scope>NUCLEOTIDE SEQUENCE [MRNA]</scope>
    <source>
        <strain>cv. 1399</strain>
        <tissue>Stamen</tissue>
    </source>
</reference>
<accession>O82106</accession>
<organism>
    <name type="scientific">Zea mays</name>
    <name type="common">Maize</name>
    <dbReference type="NCBI Taxonomy" id="4577"/>
    <lineage>
        <taxon>Eukaryota</taxon>
        <taxon>Viridiplantae</taxon>
        <taxon>Streptophyta</taxon>
        <taxon>Embryophyta</taxon>
        <taxon>Tracheophyta</taxon>
        <taxon>Spermatophyta</taxon>
        <taxon>Magnoliopsida</taxon>
        <taxon>Liliopsida</taxon>
        <taxon>Poales</taxon>
        <taxon>Poaceae</taxon>
        <taxon>PACMAD clade</taxon>
        <taxon>Panicoideae</taxon>
        <taxon>Andropogonodae</taxon>
        <taxon>Andropogoneae</taxon>
        <taxon>Tripsacinae</taxon>
        <taxon>Zea</taxon>
    </lineage>
</organism>
<evidence type="ECO:0000250" key="1"/>
<evidence type="ECO:0000255" key="2"/>
<evidence type="ECO:0000305" key="3"/>
<dbReference type="EMBL" id="AJ224355">
    <property type="protein sequence ID" value="CAA11913.1"/>
    <property type="molecule type" value="mRNA"/>
</dbReference>
<dbReference type="PIR" id="T02762">
    <property type="entry name" value="T02762"/>
</dbReference>
<dbReference type="FunCoup" id="O82106">
    <property type="interactions" value="119"/>
</dbReference>
<dbReference type="PaxDb" id="4577-GRMZM2G073377_P02"/>
<dbReference type="eggNOG" id="ENOG502S7SH">
    <property type="taxonomic scope" value="Eukaryota"/>
</dbReference>
<dbReference type="InParanoid" id="O82106"/>
<dbReference type="Proteomes" id="UP000007305">
    <property type="component" value="Unplaced"/>
</dbReference>
<dbReference type="ExpressionAtlas" id="O82106">
    <property type="expression patterns" value="baseline and differential"/>
</dbReference>
<dbReference type="GO" id="GO:0005576">
    <property type="term" value="C:extracellular region"/>
    <property type="evidence" value="ECO:0007669"/>
    <property type="project" value="UniProtKB-SubCell"/>
</dbReference>
<dbReference type="Gene3D" id="1.10.110.10">
    <property type="entry name" value="Plant lipid-transfer and hydrophobic proteins"/>
    <property type="match status" value="1"/>
</dbReference>
<dbReference type="InterPro" id="IPR036312">
    <property type="entry name" value="Bifun_inhib/LTP/seed_sf"/>
</dbReference>
<dbReference type="InterPro" id="IPR016140">
    <property type="entry name" value="Bifunc_inhib/LTP/seed_store"/>
</dbReference>
<dbReference type="PANTHER" id="PTHR35501">
    <property type="entry name" value="PROTEIN YY1"/>
    <property type="match status" value="1"/>
</dbReference>
<dbReference type="PANTHER" id="PTHR35501:SF3">
    <property type="entry name" value="PROTEIN YY1"/>
    <property type="match status" value="1"/>
</dbReference>
<dbReference type="Pfam" id="PF14368">
    <property type="entry name" value="LTP_2"/>
    <property type="match status" value="1"/>
</dbReference>
<dbReference type="SMART" id="SM00499">
    <property type="entry name" value="AAI"/>
    <property type="match status" value="1"/>
</dbReference>
<dbReference type="SUPFAM" id="SSF47699">
    <property type="entry name" value="Bifunctional inhibitor/lipid-transfer protein/seed storage 2S albumin"/>
    <property type="match status" value="1"/>
</dbReference>
<protein>
    <recommendedName>
        <fullName>Anther-specific protein MZm3-3</fullName>
    </recommendedName>
</protein>
<keyword id="KW-1015">Disulfide bond</keyword>
<keyword id="KW-1185">Reference proteome</keyword>
<keyword id="KW-0964">Secreted</keyword>
<keyword id="KW-0732">Signal</keyword>